<name>SYDP_SALPC</name>
<reference key="1">
    <citation type="journal article" date="2009" name="PLoS ONE">
        <title>Salmonella paratyphi C: genetic divergence from Salmonella choleraesuis and pathogenic convergence with Salmonella typhi.</title>
        <authorList>
            <person name="Liu W.-Q."/>
            <person name="Feng Y."/>
            <person name="Wang Y."/>
            <person name="Zou Q.-H."/>
            <person name="Chen F."/>
            <person name="Guo J.-T."/>
            <person name="Peng Y.-H."/>
            <person name="Jin Y."/>
            <person name="Li Y.-G."/>
            <person name="Hu S.-N."/>
            <person name="Johnston R.N."/>
            <person name="Liu G.-R."/>
            <person name="Liu S.-L."/>
        </authorList>
    </citation>
    <scope>NUCLEOTIDE SEQUENCE [LARGE SCALE GENOMIC DNA]</scope>
    <source>
        <strain>RKS4594</strain>
    </source>
</reference>
<dbReference type="EMBL" id="CP000857">
    <property type="protein sequence ID" value="ACN47113.1"/>
    <property type="molecule type" value="Genomic_DNA"/>
</dbReference>
<dbReference type="RefSeq" id="WP_000343990.1">
    <property type="nucleotide sequence ID" value="NC_012125.1"/>
</dbReference>
<dbReference type="SMR" id="C0PXF5"/>
<dbReference type="KEGG" id="sei:SPC_3024"/>
<dbReference type="HOGENOM" id="CLU_121866_0_0_6"/>
<dbReference type="Proteomes" id="UP000001599">
    <property type="component" value="Chromosome"/>
</dbReference>
<dbReference type="GO" id="GO:0009898">
    <property type="term" value="C:cytoplasmic side of plasma membrane"/>
    <property type="evidence" value="ECO:0007669"/>
    <property type="project" value="InterPro"/>
</dbReference>
<dbReference type="CDD" id="cd16323">
    <property type="entry name" value="Syd"/>
    <property type="match status" value="1"/>
</dbReference>
<dbReference type="Gene3D" id="3.40.1580.20">
    <property type="entry name" value="Syd protein"/>
    <property type="match status" value="1"/>
</dbReference>
<dbReference type="HAMAP" id="MF_01104">
    <property type="entry name" value="Syd"/>
    <property type="match status" value="1"/>
</dbReference>
<dbReference type="InterPro" id="IPR009948">
    <property type="entry name" value="Syd"/>
</dbReference>
<dbReference type="InterPro" id="IPR038228">
    <property type="entry name" value="Syd_sf"/>
</dbReference>
<dbReference type="NCBIfam" id="NF003439">
    <property type="entry name" value="PRK04968.1"/>
    <property type="match status" value="1"/>
</dbReference>
<dbReference type="Pfam" id="PF07348">
    <property type="entry name" value="Syd"/>
    <property type="match status" value="1"/>
</dbReference>
<keyword id="KW-0997">Cell inner membrane</keyword>
<keyword id="KW-1003">Cell membrane</keyword>
<keyword id="KW-0472">Membrane</keyword>
<evidence type="ECO:0000255" key="1">
    <source>
        <dbReference type="HAMAP-Rule" id="MF_01104"/>
    </source>
</evidence>
<gene>
    <name evidence="1" type="primary">syd</name>
    <name type="ordered locus">SPC_3024</name>
</gene>
<sequence length="181" mass="20518">MDELTAQALKAFTTRYCDAWQEKHGSWPLSEELYGVPSPCIISSTRDAVYWQPQPFEGEENVNAVERAFDIMVQPALHAFYTTQFAGDMPAQFADEKLTLLQTWSQDDFRRVQENLIGHLVTQKRLKLPPTLFIATQENELEVISVCNLSGEVIKETLGTRNRTVLAATLAEFLTQLNPLL</sequence>
<comment type="function">
    <text evidence="1">Interacts with the SecY protein in vivo. May bind preferentially to an uncomplexed state of SecY, thus functioning either as a chelating agent for excess SecY in the cell or as a regulatory factor that negatively controls the translocase function.</text>
</comment>
<comment type="subcellular location">
    <subcellularLocation>
        <location evidence="1">Cell inner membrane</location>
        <topology evidence="1">Peripheral membrane protein</topology>
        <orientation evidence="1">Cytoplasmic side</orientation>
    </subcellularLocation>
    <text evidence="1">Loosely associated with the cytoplasmic side of the inner membrane, probably via SecY.</text>
</comment>
<comment type="similarity">
    <text evidence="1">Belongs to the Syd family.</text>
</comment>
<feature type="chain" id="PRO_1000163947" description="Protein Syd">
    <location>
        <begin position="1"/>
        <end position="181"/>
    </location>
</feature>
<proteinExistence type="inferred from homology"/>
<accession>C0PXF5</accession>
<protein>
    <recommendedName>
        <fullName evidence="1">Protein Syd</fullName>
    </recommendedName>
</protein>
<organism>
    <name type="scientific">Salmonella paratyphi C (strain RKS4594)</name>
    <dbReference type="NCBI Taxonomy" id="476213"/>
    <lineage>
        <taxon>Bacteria</taxon>
        <taxon>Pseudomonadati</taxon>
        <taxon>Pseudomonadota</taxon>
        <taxon>Gammaproteobacteria</taxon>
        <taxon>Enterobacterales</taxon>
        <taxon>Enterobacteriaceae</taxon>
        <taxon>Salmonella</taxon>
    </lineage>
</organism>